<dbReference type="EMBL" id="FN393067">
    <property type="protein sequence ID" value="CAY79208.1"/>
    <property type="molecule type" value="Genomic_DNA"/>
</dbReference>
<dbReference type="SMR" id="C8Z742"/>
<dbReference type="GlyCosmos" id="C8Z742">
    <property type="glycosylation" value="2 sites, No reported glycans"/>
</dbReference>
<dbReference type="HOGENOM" id="CLU_025360_1_2_1"/>
<dbReference type="OrthoDB" id="3994at4893"/>
<dbReference type="Proteomes" id="UP000000286">
    <property type="component" value="Chromosome V, Scaffold EC1118_1E8"/>
</dbReference>
<dbReference type="GO" id="GO:0030659">
    <property type="term" value="C:cytoplasmic vesicle membrane"/>
    <property type="evidence" value="ECO:0007669"/>
    <property type="project" value="UniProtKB-SubCell"/>
</dbReference>
<dbReference type="GO" id="GO:0005789">
    <property type="term" value="C:endoplasmic reticulum membrane"/>
    <property type="evidence" value="ECO:0007669"/>
    <property type="project" value="UniProtKB-SubCell"/>
</dbReference>
<dbReference type="GO" id="GO:0000139">
    <property type="term" value="C:Golgi membrane"/>
    <property type="evidence" value="ECO:0007669"/>
    <property type="project" value="UniProtKB-SubCell"/>
</dbReference>
<dbReference type="InterPro" id="IPR050186">
    <property type="entry name" value="TPT_transporter"/>
</dbReference>
<dbReference type="NCBIfam" id="TIGR00803">
    <property type="entry name" value="nst"/>
    <property type="match status" value="1"/>
</dbReference>
<dbReference type="PANTHER" id="PTHR11132">
    <property type="entry name" value="SOLUTE CARRIER FAMILY 35"/>
    <property type="match status" value="1"/>
</dbReference>
<dbReference type="SUPFAM" id="SSF103481">
    <property type="entry name" value="Multidrug resistance efflux transporter EmrE"/>
    <property type="match status" value="1"/>
</dbReference>
<accession>C8Z742</accession>
<name>GMT2_YEAS8</name>
<proteinExistence type="inferred from homology"/>
<evidence type="ECO:0000250" key="1"/>
<evidence type="ECO:0000255" key="2"/>
<evidence type="ECO:0000305" key="3"/>
<keyword id="KW-0968">Cytoplasmic vesicle</keyword>
<keyword id="KW-0256">Endoplasmic reticulum</keyword>
<keyword id="KW-0325">Glycoprotein</keyword>
<keyword id="KW-0333">Golgi apparatus</keyword>
<keyword id="KW-0472">Membrane</keyword>
<keyword id="KW-0762">Sugar transport</keyword>
<keyword id="KW-0812">Transmembrane</keyword>
<keyword id="KW-1133">Transmembrane helix</keyword>
<keyword id="KW-0813">Transport</keyword>
<protein>
    <recommendedName>
        <fullName>Probable GDP-mannose transporter 2</fullName>
        <shortName>GMT 2</shortName>
    </recommendedName>
</protein>
<organism>
    <name type="scientific">Saccharomyces cerevisiae (strain Lalvin EC1118 / Prise de mousse)</name>
    <name type="common">Baker's yeast</name>
    <dbReference type="NCBI Taxonomy" id="643680"/>
    <lineage>
        <taxon>Eukaryota</taxon>
        <taxon>Fungi</taxon>
        <taxon>Dikarya</taxon>
        <taxon>Ascomycota</taxon>
        <taxon>Saccharomycotina</taxon>
        <taxon>Saccharomycetes</taxon>
        <taxon>Saccharomycetales</taxon>
        <taxon>Saccharomycetaceae</taxon>
        <taxon>Saccharomyces</taxon>
    </lineage>
</organism>
<comment type="function">
    <text evidence="1">Involved in the import of GDP-mannose from the cytoplasm into the Golgi lumen.</text>
</comment>
<comment type="subcellular location">
    <subcellularLocation>
        <location evidence="1">Golgi apparatus membrane</location>
        <topology evidence="1">Multi-pass membrane protein</topology>
    </subcellularLocation>
    <subcellularLocation>
        <location evidence="1">Cytoplasmic vesicle membrane</location>
        <topology evidence="1">Multi-pass membrane protein</topology>
    </subcellularLocation>
    <subcellularLocation>
        <location evidence="1">Endoplasmic reticulum membrane</location>
        <topology evidence="1">Multi-pass membrane protein</topology>
    </subcellularLocation>
    <text evidence="1">Recycles between the Golgi apparatus and the endoplasmic reticulum.</text>
</comment>
<comment type="similarity">
    <text evidence="3">Belongs to the TPT transporter family. SLC35D subfamily.</text>
</comment>
<gene>
    <name type="primary">HVG1</name>
    <name type="synonym">YEM9</name>
    <name type="ORF">EC1118_1E8_1442g</name>
</gene>
<sequence length="341" mass="38049">MSKHKHEWTESVANSGPASILSYCASSILMTVTNKFVVNLDNFNMNFVMLFVQSLVCTVTLCILRIVGVANFRSLNRTDVKNWFPISLLLVLMIYTSLKSLQYLAVPIYTIFKNLTIILIAYGEVLFFGGKVTSMELTSFIMMVLSSVVATWGDQQAIAIKASSLEDLDQELVESTIFVLNPGYLWMFTNCISSALFVLIMRKRIRLTNFKDYDTMFYNNVLALPLLLVFSFIMEDWSTKNLSVNLSADSLAAMVISGLMSVGISYCSGWCVRVTSSTTYSMVGALNKLPIALAGLVFFDAPKNFLSFFSIFLGFLSGLLYAVAKQKKIQQQKVLAATLEK</sequence>
<reference key="1">
    <citation type="journal article" date="2009" name="Proc. Natl. Acad. Sci. U.S.A.">
        <title>Eukaryote-to-eukaryote gene transfer events revealed by the genome sequence of the wine yeast Saccharomyces cerevisiae EC1118.</title>
        <authorList>
            <person name="Novo M."/>
            <person name="Bigey F."/>
            <person name="Beyne E."/>
            <person name="Galeote V."/>
            <person name="Gavory F."/>
            <person name="Mallet S."/>
            <person name="Cambon B."/>
            <person name="Legras J.-L."/>
            <person name="Wincker P."/>
            <person name="Casaregola S."/>
            <person name="Dequin S."/>
        </authorList>
    </citation>
    <scope>NUCLEOTIDE SEQUENCE [LARGE SCALE GENOMIC DNA]</scope>
    <source>
        <strain>Lalvin EC1118 / Prise de mousse</strain>
    </source>
</reference>
<feature type="chain" id="PRO_0000391665" description="Probable GDP-mannose transporter 2">
    <location>
        <begin position="1"/>
        <end position="341"/>
    </location>
</feature>
<feature type="topological domain" description="Cytoplasmic" evidence="1">
    <location>
        <begin position="1"/>
        <end position="11"/>
    </location>
</feature>
<feature type="transmembrane region" description="Helical" evidence="2">
    <location>
        <begin position="12"/>
        <end position="32"/>
    </location>
</feature>
<feature type="topological domain" description="Lumenal" evidence="1">
    <location>
        <begin position="33"/>
        <end position="46"/>
    </location>
</feature>
<feature type="transmembrane region" description="Helical" evidence="2">
    <location>
        <begin position="47"/>
        <end position="67"/>
    </location>
</feature>
<feature type="topological domain" description="Cytoplasmic" evidence="1">
    <location>
        <begin position="68"/>
        <end position="85"/>
    </location>
</feature>
<feature type="transmembrane region" description="Helical" evidence="2">
    <location>
        <begin position="86"/>
        <end position="106"/>
    </location>
</feature>
<feature type="topological domain" description="Lumenal" evidence="1">
    <location>
        <position position="107"/>
    </location>
</feature>
<feature type="transmembrane region" description="Helical" evidence="2">
    <location>
        <begin position="108"/>
        <end position="128"/>
    </location>
</feature>
<feature type="topological domain" description="Cytoplasmic" evidence="1">
    <location>
        <begin position="129"/>
        <end position="139"/>
    </location>
</feature>
<feature type="transmembrane region" description="Helical" evidence="2">
    <location>
        <begin position="140"/>
        <end position="160"/>
    </location>
</feature>
<feature type="topological domain" description="Lumenal" evidence="1">
    <location>
        <begin position="161"/>
        <end position="176"/>
    </location>
</feature>
<feature type="transmembrane region" description="Helical" evidence="2">
    <location>
        <begin position="177"/>
        <end position="197"/>
    </location>
</feature>
<feature type="topological domain" description="Cytoplasmic" evidence="1">
    <location>
        <begin position="198"/>
        <end position="214"/>
    </location>
</feature>
<feature type="transmembrane region" description="Helical" evidence="2">
    <location>
        <begin position="215"/>
        <end position="235"/>
    </location>
</feature>
<feature type="topological domain" description="Lumenal" evidence="1">
    <location>
        <begin position="236"/>
        <end position="251"/>
    </location>
</feature>
<feature type="transmembrane region" description="Helical" evidence="2">
    <location>
        <begin position="252"/>
        <end position="272"/>
    </location>
</feature>
<feature type="topological domain" description="Cytoplasmic" evidence="1">
    <location>
        <begin position="273"/>
        <end position="278"/>
    </location>
</feature>
<feature type="transmembrane region" description="Helical" evidence="2">
    <location>
        <begin position="279"/>
        <end position="299"/>
    </location>
</feature>
<feature type="topological domain" description="Lumenal" evidence="1">
    <location>
        <begin position="300"/>
        <end position="303"/>
    </location>
</feature>
<feature type="transmembrane region" description="Helical" evidence="2">
    <location>
        <begin position="304"/>
        <end position="324"/>
    </location>
</feature>
<feature type="topological domain" description="Cytoplasmic" evidence="1">
    <location>
        <begin position="325"/>
        <end position="341"/>
    </location>
</feature>
<feature type="glycosylation site" description="N-linked (GlcNAc...) asparagine" evidence="2">
    <location>
        <position position="241"/>
    </location>
</feature>
<feature type="glycosylation site" description="N-linked (GlcNAc...) asparagine" evidence="2">
    <location>
        <position position="245"/>
    </location>
</feature>